<sequence>MAKRRERRGRRQHRSHRRIQRIIDGADFINYMPDDILHHILSFIPTDLAMRTSVLSRRWRHVWCETPCLDITLKHGAMNQTLTSYTAPIITSFKLVMDLNSNTVPQVDSWIEFALSRNVQNLSVFVRDFTYSKTYRFPDIFYLSSSLKLLDVTLDFFDMIPTCTVSWKSLRNLTLRFCQIPDESIHNILSGCPILESLTLDTCRLLERLDLSKSPNLRRLDINQQYRRTGPVAIVAPHIYYLRLTYSSTPSTIVDVSSLSEANLTIISSLLSPLTADGYQTMALEMLSKFHNVKRLTVGETLLQILSLAELRGVPFPTLKVQTLTVKTEFVRSVIPGISRLLQNSPGLKKLRPSTMKMHHLKGLYPDQCWRSTCEVFPTSKEIYKMLGCNDATLKLVASFMDLVLRNAKTLERMVVWLGGIYFNGDAPWFEEELFDMVETLSRNNNVSILLKQSNC</sequence>
<feature type="chain" id="PRO_0000281975" description="Putative F-box/LRR-repeat protein At5g02700">
    <location>
        <begin position="1"/>
        <end position="456"/>
    </location>
</feature>
<feature type="domain" description="F-box">
    <location>
        <begin position="26"/>
        <end position="72"/>
    </location>
</feature>
<feature type="repeat" description="LRR 1">
    <location>
        <begin position="126"/>
        <end position="154"/>
    </location>
</feature>
<feature type="repeat" description="LRR 2">
    <location>
        <begin position="177"/>
        <end position="202"/>
    </location>
</feature>
<feature type="repeat" description="LRR 3">
    <location>
        <begin position="206"/>
        <end position="224"/>
    </location>
</feature>
<feature type="repeat" description="LRR 4">
    <location>
        <begin position="271"/>
        <end position="300"/>
    </location>
</feature>
<feature type="repeat" description="LRR 5">
    <location>
        <begin position="330"/>
        <end position="355"/>
    </location>
</feature>
<organism>
    <name type="scientific">Arabidopsis thaliana</name>
    <name type="common">Mouse-ear cress</name>
    <dbReference type="NCBI Taxonomy" id="3702"/>
    <lineage>
        <taxon>Eukaryota</taxon>
        <taxon>Viridiplantae</taxon>
        <taxon>Streptophyta</taxon>
        <taxon>Embryophyta</taxon>
        <taxon>Tracheophyta</taxon>
        <taxon>Spermatophyta</taxon>
        <taxon>Magnoliopsida</taxon>
        <taxon>eudicotyledons</taxon>
        <taxon>Gunneridae</taxon>
        <taxon>Pentapetalae</taxon>
        <taxon>rosids</taxon>
        <taxon>malvids</taxon>
        <taxon>Brassicales</taxon>
        <taxon>Brassicaceae</taxon>
        <taxon>Camelineae</taxon>
        <taxon>Arabidopsis</taxon>
    </lineage>
</organism>
<name>FBL78_ARATH</name>
<accession>Q9LZ15</accession>
<protein>
    <recommendedName>
        <fullName>Putative F-box/LRR-repeat protein At5g02700</fullName>
    </recommendedName>
</protein>
<dbReference type="EMBL" id="AL162973">
    <property type="protein sequence ID" value="CAB86024.1"/>
    <property type="molecule type" value="Genomic_DNA"/>
</dbReference>
<dbReference type="EMBL" id="CP002688">
    <property type="protein sequence ID" value="AED90507.1"/>
    <property type="molecule type" value="Genomic_DNA"/>
</dbReference>
<dbReference type="PIR" id="T48291">
    <property type="entry name" value="T48291"/>
</dbReference>
<dbReference type="RefSeq" id="NP_195890.1">
    <property type="nucleotide sequence ID" value="NM_120348.2"/>
</dbReference>
<dbReference type="FunCoup" id="Q9LZ15">
    <property type="interactions" value="511"/>
</dbReference>
<dbReference type="STRING" id="3702.Q9LZ15"/>
<dbReference type="GlyGen" id="Q9LZ15">
    <property type="glycosylation" value="1 site"/>
</dbReference>
<dbReference type="PaxDb" id="3702-AT5G02700.1"/>
<dbReference type="EnsemblPlants" id="AT5G02700.1">
    <property type="protein sequence ID" value="AT5G02700.1"/>
    <property type="gene ID" value="AT5G02700"/>
</dbReference>
<dbReference type="GeneID" id="831837"/>
<dbReference type="Gramene" id="AT5G02700.1">
    <property type="protein sequence ID" value="AT5G02700.1"/>
    <property type="gene ID" value="AT5G02700"/>
</dbReference>
<dbReference type="KEGG" id="ath:AT5G02700"/>
<dbReference type="Araport" id="AT5G02700"/>
<dbReference type="TAIR" id="AT5G02700"/>
<dbReference type="HOGENOM" id="CLU_010721_5_0_1"/>
<dbReference type="InParanoid" id="Q9LZ15"/>
<dbReference type="OMA" id="QYSSTHP"/>
<dbReference type="PhylomeDB" id="Q9LZ15"/>
<dbReference type="PRO" id="PR:Q9LZ15"/>
<dbReference type="Proteomes" id="UP000006548">
    <property type="component" value="Chromosome 5"/>
</dbReference>
<dbReference type="ExpressionAtlas" id="Q9LZ15">
    <property type="expression patterns" value="differential"/>
</dbReference>
<dbReference type="CDD" id="cd22160">
    <property type="entry name" value="F-box_AtFBL13-like"/>
    <property type="match status" value="1"/>
</dbReference>
<dbReference type="Gene3D" id="1.20.1280.50">
    <property type="match status" value="1"/>
</dbReference>
<dbReference type="Gene3D" id="3.80.10.10">
    <property type="entry name" value="Ribonuclease Inhibitor"/>
    <property type="match status" value="1"/>
</dbReference>
<dbReference type="InterPro" id="IPR036047">
    <property type="entry name" value="F-box-like_dom_sf"/>
</dbReference>
<dbReference type="InterPro" id="IPR053781">
    <property type="entry name" value="F-box_AtFBL13-like"/>
</dbReference>
<dbReference type="InterPro" id="IPR001810">
    <property type="entry name" value="F-box_dom"/>
</dbReference>
<dbReference type="InterPro" id="IPR044997">
    <property type="entry name" value="F-box_plant"/>
</dbReference>
<dbReference type="InterPro" id="IPR032675">
    <property type="entry name" value="LRR_dom_sf"/>
</dbReference>
<dbReference type="InterPro" id="IPR055411">
    <property type="entry name" value="LRR_FXL15/At3g58940/PEG3-like"/>
</dbReference>
<dbReference type="PANTHER" id="PTHR32153">
    <property type="entry name" value="OJ000223_09.16 PROTEIN"/>
    <property type="match status" value="1"/>
</dbReference>
<dbReference type="Pfam" id="PF00646">
    <property type="entry name" value="F-box"/>
    <property type="match status" value="1"/>
</dbReference>
<dbReference type="Pfam" id="PF24758">
    <property type="entry name" value="LRR_At5g56370"/>
    <property type="match status" value="1"/>
</dbReference>
<dbReference type="SMART" id="SM00256">
    <property type="entry name" value="FBOX"/>
    <property type="match status" value="2"/>
</dbReference>
<dbReference type="SUPFAM" id="SSF81383">
    <property type="entry name" value="F-box domain"/>
    <property type="match status" value="1"/>
</dbReference>
<dbReference type="SUPFAM" id="SSF52047">
    <property type="entry name" value="RNI-like"/>
    <property type="match status" value="1"/>
</dbReference>
<proteinExistence type="predicted"/>
<keyword id="KW-0433">Leucine-rich repeat</keyword>
<keyword id="KW-1185">Reference proteome</keyword>
<keyword id="KW-0677">Repeat</keyword>
<reference key="1">
    <citation type="journal article" date="2000" name="Nature">
        <title>Sequence and analysis of chromosome 5 of the plant Arabidopsis thaliana.</title>
        <authorList>
            <person name="Tabata S."/>
            <person name="Kaneko T."/>
            <person name="Nakamura Y."/>
            <person name="Kotani H."/>
            <person name="Kato T."/>
            <person name="Asamizu E."/>
            <person name="Miyajima N."/>
            <person name="Sasamoto S."/>
            <person name="Kimura T."/>
            <person name="Hosouchi T."/>
            <person name="Kawashima K."/>
            <person name="Kohara M."/>
            <person name="Matsumoto M."/>
            <person name="Matsuno A."/>
            <person name="Muraki A."/>
            <person name="Nakayama S."/>
            <person name="Nakazaki N."/>
            <person name="Naruo K."/>
            <person name="Okumura S."/>
            <person name="Shinpo S."/>
            <person name="Takeuchi C."/>
            <person name="Wada T."/>
            <person name="Watanabe A."/>
            <person name="Yamada M."/>
            <person name="Yasuda M."/>
            <person name="Sato S."/>
            <person name="de la Bastide M."/>
            <person name="Huang E."/>
            <person name="Spiegel L."/>
            <person name="Gnoj L."/>
            <person name="O'Shaughnessy A."/>
            <person name="Preston R."/>
            <person name="Habermann K."/>
            <person name="Murray J."/>
            <person name="Johnson D."/>
            <person name="Rohlfing T."/>
            <person name="Nelson J."/>
            <person name="Stoneking T."/>
            <person name="Pepin K."/>
            <person name="Spieth J."/>
            <person name="Sekhon M."/>
            <person name="Armstrong J."/>
            <person name="Becker M."/>
            <person name="Belter E."/>
            <person name="Cordum H."/>
            <person name="Cordes M."/>
            <person name="Courtney L."/>
            <person name="Courtney W."/>
            <person name="Dante M."/>
            <person name="Du H."/>
            <person name="Edwards J."/>
            <person name="Fryman J."/>
            <person name="Haakensen B."/>
            <person name="Lamar E."/>
            <person name="Latreille P."/>
            <person name="Leonard S."/>
            <person name="Meyer R."/>
            <person name="Mulvaney E."/>
            <person name="Ozersky P."/>
            <person name="Riley A."/>
            <person name="Strowmatt C."/>
            <person name="Wagner-McPherson C."/>
            <person name="Wollam A."/>
            <person name="Yoakum M."/>
            <person name="Bell M."/>
            <person name="Dedhia N."/>
            <person name="Parnell L."/>
            <person name="Shah R."/>
            <person name="Rodriguez M."/>
            <person name="Hoon See L."/>
            <person name="Vil D."/>
            <person name="Baker J."/>
            <person name="Kirchoff K."/>
            <person name="Toth K."/>
            <person name="King L."/>
            <person name="Bahret A."/>
            <person name="Miller B."/>
            <person name="Marra M.A."/>
            <person name="Martienssen R."/>
            <person name="McCombie W.R."/>
            <person name="Wilson R.K."/>
            <person name="Murphy G."/>
            <person name="Bancroft I."/>
            <person name="Volckaert G."/>
            <person name="Wambutt R."/>
            <person name="Duesterhoeft A."/>
            <person name="Stiekema W."/>
            <person name="Pohl T."/>
            <person name="Entian K.-D."/>
            <person name="Terryn N."/>
            <person name="Hartley N."/>
            <person name="Bent E."/>
            <person name="Johnson S."/>
            <person name="Langham S.-A."/>
            <person name="McCullagh B."/>
            <person name="Robben J."/>
            <person name="Grymonprez B."/>
            <person name="Zimmermann W."/>
            <person name="Ramsperger U."/>
            <person name="Wedler H."/>
            <person name="Balke K."/>
            <person name="Wedler E."/>
            <person name="Peters S."/>
            <person name="van Staveren M."/>
            <person name="Dirkse W."/>
            <person name="Mooijman P."/>
            <person name="Klein Lankhorst R."/>
            <person name="Weitzenegger T."/>
            <person name="Bothe G."/>
            <person name="Rose M."/>
            <person name="Hauf J."/>
            <person name="Berneiser S."/>
            <person name="Hempel S."/>
            <person name="Feldpausch M."/>
            <person name="Lamberth S."/>
            <person name="Villarroel R."/>
            <person name="Gielen J."/>
            <person name="Ardiles W."/>
            <person name="Bents O."/>
            <person name="Lemcke K."/>
            <person name="Kolesov G."/>
            <person name="Mayer K.F.X."/>
            <person name="Rudd S."/>
            <person name="Schoof H."/>
            <person name="Schueller C."/>
            <person name="Zaccaria P."/>
            <person name="Mewes H.-W."/>
            <person name="Bevan M."/>
            <person name="Fransz P.F."/>
        </authorList>
    </citation>
    <scope>NUCLEOTIDE SEQUENCE [LARGE SCALE GENOMIC DNA]</scope>
    <source>
        <strain>cv. Columbia</strain>
    </source>
</reference>
<reference key="2">
    <citation type="journal article" date="2017" name="Plant J.">
        <title>Araport11: a complete reannotation of the Arabidopsis thaliana reference genome.</title>
        <authorList>
            <person name="Cheng C.Y."/>
            <person name="Krishnakumar V."/>
            <person name="Chan A.P."/>
            <person name="Thibaud-Nissen F."/>
            <person name="Schobel S."/>
            <person name="Town C.D."/>
        </authorList>
    </citation>
    <scope>GENOME REANNOTATION</scope>
    <source>
        <strain>cv. Columbia</strain>
    </source>
</reference>
<gene>
    <name type="ordered locus">At5g02700</name>
    <name type="ORF">F9G14.10</name>
</gene>